<protein>
    <recommendedName>
        <fullName evidence="1">UPF0482 protein YnfB</fullName>
    </recommendedName>
</protein>
<organism>
    <name type="scientific">Escherichia coli O1:K1 / APEC</name>
    <dbReference type="NCBI Taxonomy" id="405955"/>
    <lineage>
        <taxon>Bacteria</taxon>
        <taxon>Pseudomonadati</taxon>
        <taxon>Pseudomonadota</taxon>
        <taxon>Gammaproteobacteria</taxon>
        <taxon>Enterobacterales</taxon>
        <taxon>Enterobacteriaceae</taxon>
        <taxon>Escherichia</taxon>
    </lineage>
</organism>
<sequence length="113" mass="12974">MKITLSKRIGLLAFLLPCALALSTTVHAETNKLVIESGDSAQSRQRAAMEKEQWNDTRNLRQKVNKRTEKEWDKADAAFDNRDKCEQSANINAYWEPNTLRCLDRRTGRVIIP</sequence>
<feature type="signal peptide" evidence="1">
    <location>
        <begin position="1"/>
        <end position="28"/>
    </location>
</feature>
<feature type="chain" id="PRO_0000300222" description="UPF0482 protein YnfB">
    <location>
        <begin position="29"/>
        <end position="113"/>
    </location>
</feature>
<keyword id="KW-1185">Reference proteome</keyword>
<keyword id="KW-0732">Signal</keyword>
<name>YNFB_ECOK1</name>
<accession>A1ABC8</accession>
<evidence type="ECO:0000255" key="1">
    <source>
        <dbReference type="HAMAP-Rule" id="MF_01581"/>
    </source>
</evidence>
<reference key="1">
    <citation type="journal article" date="2007" name="J. Bacteriol.">
        <title>The genome sequence of avian pathogenic Escherichia coli strain O1:K1:H7 shares strong similarities with human extraintestinal pathogenic E. coli genomes.</title>
        <authorList>
            <person name="Johnson T.J."/>
            <person name="Kariyawasam S."/>
            <person name="Wannemuehler Y."/>
            <person name="Mangiamele P."/>
            <person name="Johnson S.J."/>
            <person name="Doetkott C."/>
            <person name="Skyberg J.A."/>
            <person name="Lynne A.M."/>
            <person name="Johnson J.R."/>
            <person name="Nolan L.K."/>
        </authorList>
    </citation>
    <scope>NUCLEOTIDE SEQUENCE [LARGE SCALE GENOMIC DNA]</scope>
</reference>
<gene>
    <name evidence="1" type="primary">ynfB</name>
    <name type="ordered locus">Ecok1_14740</name>
    <name type="ORF">APECO1_666</name>
</gene>
<dbReference type="EMBL" id="CP000468">
    <property type="protein sequence ID" value="ABJ00968.1"/>
    <property type="molecule type" value="Genomic_DNA"/>
</dbReference>
<dbReference type="RefSeq" id="WP_000705201.1">
    <property type="nucleotide sequence ID" value="NZ_CADILS010000002.1"/>
</dbReference>
<dbReference type="KEGG" id="ecv:APECO1_666"/>
<dbReference type="HOGENOM" id="CLU_167574_0_0_6"/>
<dbReference type="Proteomes" id="UP000008216">
    <property type="component" value="Chromosome"/>
</dbReference>
<dbReference type="HAMAP" id="MF_01581">
    <property type="entry name" value="UPF0482"/>
    <property type="match status" value="1"/>
</dbReference>
<dbReference type="InterPro" id="IPR009700">
    <property type="entry name" value="DUF1283"/>
</dbReference>
<dbReference type="NCBIfam" id="NF010180">
    <property type="entry name" value="PRK13659.1"/>
    <property type="match status" value="1"/>
</dbReference>
<dbReference type="Pfam" id="PF06932">
    <property type="entry name" value="DUF1283"/>
    <property type="match status" value="1"/>
</dbReference>
<comment type="similarity">
    <text evidence="1">Belongs to the UPF0482 family.</text>
</comment>
<proteinExistence type="inferred from homology"/>